<protein>
    <recommendedName>
        <fullName evidence="1">UPF0227 protein SO_2251</fullName>
    </recommendedName>
</protein>
<comment type="similarity">
    <text evidence="1">Belongs to the UPF0227 family.</text>
</comment>
<proteinExistence type="inferred from homology"/>
<feature type="chain" id="PRO_0000070323" description="UPF0227 protein SO_2251">
    <location>
        <begin position="1"/>
        <end position="179"/>
    </location>
</feature>
<name>Y2251_SHEON</name>
<reference key="1">
    <citation type="journal article" date="2002" name="Nat. Biotechnol.">
        <title>Genome sequence of the dissimilatory metal ion-reducing bacterium Shewanella oneidensis.</title>
        <authorList>
            <person name="Heidelberg J.F."/>
            <person name="Paulsen I.T."/>
            <person name="Nelson K.E."/>
            <person name="Gaidos E.J."/>
            <person name="Nelson W.C."/>
            <person name="Read T.D."/>
            <person name="Eisen J.A."/>
            <person name="Seshadri R."/>
            <person name="Ward N.L."/>
            <person name="Methe B.A."/>
            <person name="Clayton R.A."/>
            <person name="Meyer T."/>
            <person name="Tsapin A."/>
            <person name="Scott J."/>
            <person name="Beanan M.J."/>
            <person name="Brinkac L.M."/>
            <person name="Daugherty S.C."/>
            <person name="DeBoy R.T."/>
            <person name="Dodson R.J."/>
            <person name="Durkin A.S."/>
            <person name="Haft D.H."/>
            <person name="Kolonay J.F."/>
            <person name="Madupu R."/>
            <person name="Peterson J.D."/>
            <person name="Umayam L.A."/>
            <person name="White O."/>
            <person name="Wolf A.M."/>
            <person name="Vamathevan J.J."/>
            <person name="Weidman J.F."/>
            <person name="Impraim M."/>
            <person name="Lee K."/>
            <person name="Berry K.J."/>
            <person name="Lee C."/>
            <person name="Mueller J."/>
            <person name="Khouri H.M."/>
            <person name="Gill J."/>
            <person name="Utterback T.R."/>
            <person name="McDonald L.A."/>
            <person name="Feldblyum T.V."/>
            <person name="Smith H.O."/>
            <person name="Venter J.C."/>
            <person name="Nealson K.H."/>
            <person name="Fraser C.M."/>
        </authorList>
    </citation>
    <scope>NUCLEOTIDE SEQUENCE [LARGE SCALE GENOMIC DNA]</scope>
    <source>
        <strain>ATCC 700550 / JCM 31522 / CIP 106686 / LMG 19005 / NCIMB 14063 / MR-1</strain>
    </source>
</reference>
<keyword id="KW-1185">Reference proteome</keyword>
<gene>
    <name type="ordered locus">SO_2251</name>
</gene>
<accession>P59273</accession>
<sequence length="179" mass="20585">MIFYLHGFDATSPGNHEKMRQLQFIDPDVRLISYSTLHPKHDMQYLLKEVAKQMQHSDDPAPLMVGVGLGAYWAERIGFLNGLKSVLINPNLHPENTMQGKIDRPEEYADIANKCVSEFRMKNTHKAMCILSRFDEVLESQLSADELSRYYAIEWDETQPHKFPQLAAHLPKIKAFKLG</sequence>
<organism>
    <name type="scientific">Shewanella oneidensis (strain ATCC 700550 / JCM 31522 / CIP 106686 / LMG 19005 / NCIMB 14063 / MR-1)</name>
    <dbReference type="NCBI Taxonomy" id="211586"/>
    <lineage>
        <taxon>Bacteria</taxon>
        <taxon>Pseudomonadati</taxon>
        <taxon>Pseudomonadota</taxon>
        <taxon>Gammaproteobacteria</taxon>
        <taxon>Alteromonadales</taxon>
        <taxon>Shewanellaceae</taxon>
        <taxon>Shewanella</taxon>
    </lineage>
</organism>
<dbReference type="EMBL" id="AE014299">
    <property type="protein sequence ID" value="AAN55291.1"/>
    <property type="molecule type" value="Genomic_DNA"/>
</dbReference>
<dbReference type="RefSeq" id="NP_717847.1">
    <property type="nucleotide sequence ID" value="NC_004347.2"/>
</dbReference>
<dbReference type="RefSeq" id="WP_011072264.1">
    <property type="nucleotide sequence ID" value="NC_004347.2"/>
</dbReference>
<dbReference type="SMR" id="P59273"/>
<dbReference type="STRING" id="211586.SO_2251"/>
<dbReference type="ESTHER" id="sheon-ym51">
    <property type="family name" value="abh_upf00227"/>
</dbReference>
<dbReference type="PaxDb" id="211586-SO_2251"/>
<dbReference type="KEGG" id="son:SO_2251"/>
<dbReference type="PATRIC" id="fig|211586.12.peg.2167"/>
<dbReference type="eggNOG" id="COG3150">
    <property type="taxonomic scope" value="Bacteria"/>
</dbReference>
<dbReference type="HOGENOM" id="CLU_128769_0_0_6"/>
<dbReference type="OrthoDB" id="6469735at2"/>
<dbReference type="PhylomeDB" id="P59273"/>
<dbReference type="BioCyc" id="SONE211586:G1GMP-2056-MONOMER"/>
<dbReference type="Proteomes" id="UP000008186">
    <property type="component" value="Chromosome"/>
</dbReference>
<dbReference type="GO" id="GO:0005829">
    <property type="term" value="C:cytosol"/>
    <property type="evidence" value="ECO:0000318"/>
    <property type="project" value="GO_Central"/>
</dbReference>
<dbReference type="GO" id="GO:0016788">
    <property type="term" value="F:hydrolase activity, acting on ester bonds"/>
    <property type="evidence" value="ECO:0000318"/>
    <property type="project" value="GO_Central"/>
</dbReference>
<dbReference type="Gene3D" id="3.40.50.1820">
    <property type="entry name" value="alpha/beta hydrolase"/>
    <property type="match status" value="1"/>
</dbReference>
<dbReference type="HAMAP" id="MF_01047">
    <property type="entry name" value="UPF0227"/>
    <property type="match status" value="1"/>
</dbReference>
<dbReference type="InterPro" id="IPR029058">
    <property type="entry name" value="AB_hydrolase_fold"/>
</dbReference>
<dbReference type="InterPro" id="IPR022987">
    <property type="entry name" value="UPF0227"/>
</dbReference>
<dbReference type="InterPro" id="IPR008886">
    <property type="entry name" value="UPF0227/Esterase_YqiA"/>
</dbReference>
<dbReference type="NCBIfam" id="NF003431">
    <property type="entry name" value="PRK04940.1"/>
    <property type="match status" value="1"/>
</dbReference>
<dbReference type="PANTHER" id="PTHR35602">
    <property type="entry name" value="ESTERASE YQIA-RELATED"/>
    <property type="match status" value="1"/>
</dbReference>
<dbReference type="PANTHER" id="PTHR35602:SF2">
    <property type="entry name" value="UPF0227 PROTEIN YCFP"/>
    <property type="match status" value="1"/>
</dbReference>
<dbReference type="Pfam" id="PF05728">
    <property type="entry name" value="UPF0227"/>
    <property type="match status" value="1"/>
</dbReference>
<evidence type="ECO:0000255" key="1">
    <source>
        <dbReference type="HAMAP-Rule" id="MF_01047"/>
    </source>
</evidence>